<proteinExistence type="inferred from homology"/>
<name>LAC1_ORYSJ</name>
<organism>
    <name type="scientific">Oryza sativa subsp. japonica</name>
    <name type="common">Rice</name>
    <dbReference type="NCBI Taxonomy" id="39947"/>
    <lineage>
        <taxon>Eukaryota</taxon>
        <taxon>Viridiplantae</taxon>
        <taxon>Streptophyta</taxon>
        <taxon>Embryophyta</taxon>
        <taxon>Tracheophyta</taxon>
        <taxon>Spermatophyta</taxon>
        <taxon>Magnoliopsida</taxon>
        <taxon>Liliopsida</taxon>
        <taxon>Poales</taxon>
        <taxon>Poaceae</taxon>
        <taxon>BOP clade</taxon>
        <taxon>Oryzoideae</taxon>
        <taxon>Oryzeae</taxon>
        <taxon>Oryzinae</taxon>
        <taxon>Oryza</taxon>
        <taxon>Oryza sativa</taxon>
    </lineage>
</organism>
<keyword id="KW-0052">Apoplast</keyword>
<keyword id="KW-0186">Copper</keyword>
<keyword id="KW-0325">Glycoprotein</keyword>
<keyword id="KW-0439">Lignin degradation</keyword>
<keyword id="KW-0479">Metal-binding</keyword>
<keyword id="KW-0560">Oxidoreductase</keyword>
<keyword id="KW-1185">Reference proteome</keyword>
<keyword id="KW-0677">Repeat</keyword>
<keyword id="KW-0964">Secreted</keyword>
<keyword id="KW-0732">Signal</keyword>
<reference key="1">
    <citation type="journal article" date="2002" name="Nature">
        <title>The genome sequence and structure of rice chromosome 1.</title>
        <authorList>
            <person name="Sasaki T."/>
            <person name="Matsumoto T."/>
            <person name="Yamamoto K."/>
            <person name="Sakata K."/>
            <person name="Baba T."/>
            <person name="Katayose Y."/>
            <person name="Wu J."/>
            <person name="Niimura Y."/>
            <person name="Cheng Z."/>
            <person name="Nagamura Y."/>
            <person name="Antonio B.A."/>
            <person name="Kanamori H."/>
            <person name="Hosokawa S."/>
            <person name="Masukawa M."/>
            <person name="Arikawa K."/>
            <person name="Chiden Y."/>
            <person name="Hayashi M."/>
            <person name="Okamoto M."/>
            <person name="Ando T."/>
            <person name="Aoki H."/>
            <person name="Arita K."/>
            <person name="Hamada M."/>
            <person name="Harada C."/>
            <person name="Hijishita S."/>
            <person name="Honda M."/>
            <person name="Ichikawa Y."/>
            <person name="Idonuma A."/>
            <person name="Iijima M."/>
            <person name="Ikeda M."/>
            <person name="Ikeno M."/>
            <person name="Ito S."/>
            <person name="Ito T."/>
            <person name="Ito Y."/>
            <person name="Ito Y."/>
            <person name="Iwabuchi A."/>
            <person name="Kamiya K."/>
            <person name="Karasawa W."/>
            <person name="Katagiri S."/>
            <person name="Kikuta A."/>
            <person name="Kobayashi N."/>
            <person name="Kono I."/>
            <person name="Machita K."/>
            <person name="Maehara T."/>
            <person name="Mizuno H."/>
            <person name="Mizubayashi T."/>
            <person name="Mukai Y."/>
            <person name="Nagasaki H."/>
            <person name="Nakashima M."/>
            <person name="Nakama Y."/>
            <person name="Nakamichi Y."/>
            <person name="Nakamura M."/>
            <person name="Namiki N."/>
            <person name="Negishi M."/>
            <person name="Ohta I."/>
            <person name="Ono N."/>
            <person name="Saji S."/>
            <person name="Sakai K."/>
            <person name="Shibata M."/>
            <person name="Shimokawa T."/>
            <person name="Shomura A."/>
            <person name="Song J."/>
            <person name="Takazaki Y."/>
            <person name="Terasawa K."/>
            <person name="Tsuji K."/>
            <person name="Waki K."/>
            <person name="Yamagata H."/>
            <person name="Yamane H."/>
            <person name="Yoshiki S."/>
            <person name="Yoshihara R."/>
            <person name="Yukawa K."/>
            <person name="Zhong H."/>
            <person name="Iwama H."/>
            <person name="Endo T."/>
            <person name="Ito H."/>
            <person name="Hahn J.H."/>
            <person name="Kim H.-I."/>
            <person name="Eun M.-Y."/>
            <person name="Yano M."/>
            <person name="Jiang J."/>
            <person name="Gojobori T."/>
        </authorList>
    </citation>
    <scope>NUCLEOTIDE SEQUENCE [LARGE SCALE GENOMIC DNA]</scope>
    <source>
        <strain>cv. Nipponbare</strain>
    </source>
</reference>
<reference key="2">
    <citation type="journal article" date="2005" name="Nature">
        <title>The map-based sequence of the rice genome.</title>
        <authorList>
            <consortium name="International rice genome sequencing project (IRGSP)"/>
        </authorList>
    </citation>
    <scope>NUCLEOTIDE SEQUENCE [LARGE SCALE GENOMIC DNA]</scope>
    <source>
        <strain>cv. Nipponbare</strain>
    </source>
</reference>
<reference key="3">
    <citation type="journal article" date="2008" name="Nucleic Acids Res.">
        <title>The rice annotation project database (RAP-DB): 2008 update.</title>
        <authorList>
            <consortium name="The rice annotation project (RAP)"/>
        </authorList>
    </citation>
    <scope>GENOME REANNOTATION</scope>
    <source>
        <strain>cv. Nipponbare</strain>
    </source>
</reference>
<reference key="4">
    <citation type="journal article" date="2013" name="Rice">
        <title>Improvement of the Oryza sativa Nipponbare reference genome using next generation sequence and optical map data.</title>
        <authorList>
            <person name="Kawahara Y."/>
            <person name="de la Bastide M."/>
            <person name="Hamilton J.P."/>
            <person name="Kanamori H."/>
            <person name="McCombie W.R."/>
            <person name="Ouyang S."/>
            <person name="Schwartz D.C."/>
            <person name="Tanaka T."/>
            <person name="Wu J."/>
            <person name="Zhou S."/>
            <person name="Childs K.L."/>
            <person name="Davidson R.M."/>
            <person name="Lin H."/>
            <person name="Quesada-Ocampo L."/>
            <person name="Vaillancourt B."/>
            <person name="Sakai H."/>
            <person name="Lee S.S."/>
            <person name="Kim J."/>
            <person name="Numa H."/>
            <person name="Itoh T."/>
            <person name="Buell C.R."/>
            <person name="Matsumoto T."/>
        </authorList>
    </citation>
    <scope>GENOME REANNOTATION</scope>
    <source>
        <strain>cv. Nipponbare</strain>
    </source>
</reference>
<reference key="5">
    <citation type="journal article" date="2005" name="PLoS Biol.">
        <title>The genomes of Oryza sativa: a history of duplications.</title>
        <authorList>
            <person name="Yu J."/>
            <person name="Wang J."/>
            <person name="Lin W."/>
            <person name="Li S."/>
            <person name="Li H."/>
            <person name="Zhou J."/>
            <person name="Ni P."/>
            <person name="Dong W."/>
            <person name="Hu S."/>
            <person name="Zeng C."/>
            <person name="Zhang J."/>
            <person name="Zhang Y."/>
            <person name="Li R."/>
            <person name="Xu Z."/>
            <person name="Li S."/>
            <person name="Li X."/>
            <person name="Zheng H."/>
            <person name="Cong L."/>
            <person name="Lin L."/>
            <person name="Yin J."/>
            <person name="Geng J."/>
            <person name="Li G."/>
            <person name="Shi J."/>
            <person name="Liu J."/>
            <person name="Lv H."/>
            <person name="Li J."/>
            <person name="Wang J."/>
            <person name="Deng Y."/>
            <person name="Ran L."/>
            <person name="Shi X."/>
            <person name="Wang X."/>
            <person name="Wu Q."/>
            <person name="Li C."/>
            <person name="Ren X."/>
            <person name="Wang J."/>
            <person name="Wang X."/>
            <person name="Li D."/>
            <person name="Liu D."/>
            <person name="Zhang X."/>
            <person name="Ji Z."/>
            <person name="Zhao W."/>
            <person name="Sun Y."/>
            <person name="Zhang Z."/>
            <person name="Bao J."/>
            <person name="Han Y."/>
            <person name="Dong L."/>
            <person name="Ji J."/>
            <person name="Chen P."/>
            <person name="Wu S."/>
            <person name="Liu J."/>
            <person name="Xiao Y."/>
            <person name="Bu D."/>
            <person name="Tan J."/>
            <person name="Yang L."/>
            <person name="Ye C."/>
            <person name="Zhang J."/>
            <person name="Xu J."/>
            <person name="Zhou Y."/>
            <person name="Yu Y."/>
            <person name="Zhang B."/>
            <person name="Zhuang S."/>
            <person name="Wei H."/>
            <person name="Liu B."/>
            <person name="Lei M."/>
            <person name="Yu H."/>
            <person name="Li Y."/>
            <person name="Xu H."/>
            <person name="Wei S."/>
            <person name="He X."/>
            <person name="Fang L."/>
            <person name="Zhang Z."/>
            <person name="Zhang Y."/>
            <person name="Huang X."/>
            <person name="Su Z."/>
            <person name="Tong W."/>
            <person name="Li J."/>
            <person name="Tong Z."/>
            <person name="Li S."/>
            <person name="Ye J."/>
            <person name="Wang L."/>
            <person name="Fang L."/>
            <person name="Lei T."/>
            <person name="Chen C.-S."/>
            <person name="Chen H.-C."/>
            <person name="Xu Z."/>
            <person name="Li H."/>
            <person name="Huang H."/>
            <person name="Zhang F."/>
            <person name="Xu H."/>
            <person name="Li N."/>
            <person name="Zhao C."/>
            <person name="Li S."/>
            <person name="Dong L."/>
            <person name="Huang Y."/>
            <person name="Li L."/>
            <person name="Xi Y."/>
            <person name="Qi Q."/>
            <person name="Li W."/>
            <person name="Zhang B."/>
            <person name="Hu W."/>
            <person name="Zhang Y."/>
            <person name="Tian X."/>
            <person name="Jiao Y."/>
            <person name="Liang X."/>
            <person name="Jin J."/>
            <person name="Gao L."/>
            <person name="Zheng W."/>
            <person name="Hao B."/>
            <person name="Liu S.-M."/>
            <person name="Wang W."/>
            <person name="Yuan L."/>
            <person name="Cao M."/>
            <person name="McDermott J."/>
            <person name="Samudrala R."/>
            <person name="Wang J."/>
            <person name="Wong G.K.-S."/>
            <person name="Yang H."/>
        </authorList>
    </citation>
    <scope>NUCLEOTIDE SEQUENCE [LARGE SCALE GENOMIC DNA]</scope>
    <source>
        <strain>cv. Nipponbare</strain>
    </source>
</reference>
<accession>Q5ZCW1</accession>
<accession>A2ZTA7</accession>
<dbReference type="EC" id="1.10.3.2"/>
<dbReference type="EMBL" id="AP003199">
    <property type="protein sequence ID" value="BAD61379.1"/>
    <property type="molecule type" value="Genomic_DNA"/>
</dbReference>
<dbReference type="EMBL" id="AP008207">
    <property type="protein sequence ID" value="BAF04988.2"/>
    <property type="status" value="ALT_SEQ"/>
    <property type="molecule type" value="Genomic_DNA"/>
</dbReference>
<dbReference type="EMBL" id="AP014957">
    <property type="status" value="NOT_ANNOTATED_CDS"/>
    <property type="molecule type" value="Genomic_DNA"/>
</dbReference>
<dbReference type="EMBL" id="CM000138">
    <property type="status" value="NOT_ANNOTATED_CDS"/>
    <property type="molecule type" value="Genomic_DNA"/>
</dbReference>
<dbReference type="SMR" id="Q5ZCW1"/>
<dbReference type="STRING" id="39947.Q5ZCW1"/>
<dbReference type="GlyCosmos" id="Q5ZCW1">
    <property type="glycosylation" value="7 sites, No reported glycans"/>
</dbReference>
<dbReference type="PaxDb" id="39947-Q5ZCW1"/>
<dbReference type="KEGG" id="dosa:Os01g0374600"/>
<dbReference type="eggNOG" id="KOG1263">
    <property type="taxonomic scope" value="Eukaryota"/>
</dbReference>
<dbReference type="HOGENOM" id="CLU_006504_6_3_1"/>
<dbReference type="InParanoid" id="Q5ZCW1"/>
<dbReference type="Proteomes" id="UP000000763">
    <property type="component" value="Chromosome 1"/>
</dbReference>
<dbReference type="Proteomes" id="UP000007752">
    <property type="component" value="Chromosome 1"/>
</dbReference>
<dbReference type="Proteomes" id="UP000059680">
    <property type="component" value="Chromosome 1"/>
</dbReference>
<dbReference type="GO" id="GO:0048046">
    <property type="term" value="C:apoplast"/>
    <property type="evidence" value="ECO:0007669"/>
    <property type="project" value="UniProtKB-SubCell"/>
</dbReference>
<dbReference type="GO" id="GO:0005507">
    <property type="term" value="F:copper ion binding"/>
    <property type="evidence" value="ECO:0007669"/>
    <property type="project" value="InterPro"/>
</dbReference>
<dbReference type="GO" id="GO:0052716">
    <property type="term" value="F:hydroquinone:oxygen oxidoreductase activity"/>
    <property type="evidence" value="ECO:0007669"/>
    <property type="project" value="UniProtKB-EC"/>
</dbReference>
<dbReference type="GO" id="GO:0016491">
    <property type="term" value="F:oxidoreductase activity"/>
    <property type="evidence" value="ECO:0000318"/>
    <property type="project" value="GO_Central"/>
</dbReference>
<dbReference type="GO" id="GO:0046274">
    <property type="term" value="P:lignin catabolic process"/>
    <property type="evidence" value="ECO:0007669"/>
    <property type="project" value="UniProtKB-KW"/>
</dbReference>
<dbReference type="CDD" id="cd13849">
    <property type="entry name" value="CuRO_1_LCC_plant"/>
    <property type="match status" value="1"/>
</dbReference>
<dbReference type="CDD" id="cd13875">
    <property type="entry name" value="CuRO_2_LCC_plant"/>
    <property type="match status" value="1"/>
</dbReference>
<dbReference type="CDD" id="cd13897">
    <property type="entry name" value="CuRO_3_LCC_plant"/>
    <property type="match status" value="1"/>
</dbReference>
<dbReference type="Gene3D" id="2.60.40.420">
    <property type="entry name" value="Cupredoxins - blue copper proteins"/>
    <property type="match status" value="3"/>
</dbReference>
<dbReference type="InterPro" id="IPR011707">
    <property type="entry name" value="Cu-oxidase-like_N"/>
</dbReference>
<dbReference type="InterPro" id="IPR001117">
    <property type="entry name" value="Cu-oxidase_2nd"/>
</dbReference>
<dbReference type="InterPro" id="IPR011706">
    <property type="entry name" value="Cu-oxidase_C"/>
</dbReference>
<dbReference type="InterPro" id="IPR045087">
    <property type="entry name" value="Cu-oxidase_fam"/>
</dbReference>
<dbReference type="InterPro" id="IPR033138">
    <property type="entry name" value="Cu_oxidase_CS"/>
</dbReference>
<dbReference type="InterPro" id="IPR002355">
    <property type="entry name" value="Cu_oxidase_Cu_BS"/>
</dbReference>
<dbReference type="InterPro" id="IPR008972">
    <property type="entry name" value="Cupredoxin"/>
</dbReference>
<dbReference type="InterPro" id="IPR034288">
    <property type="entry name" value="CuRO_1_LCC"/>
</dbReference>
<dbReference type="InterPro" id="IPR034285">
    <property type="entry name" value="CuRO_2_LCC"/>
</dbReference>
<dbReference type="InterPro" id="IPR034289">
    <property type="entry name" value="CuRO_3_LCC"/>
</dbReference>
<dbReference type="InterPro" id="IPR017761">
    <property type="entry name" value="Laccase"/>
</dbReference>
<dbReference type="NCBIfam" id="TIGR03389">
    <property type="entry name" value="laccase"/>
    <property type="match status" value="1"/>
</dbReference>
<dbReference type="PANTHER" id="PTHR11709:SF262">
    <property type="entry name" value="LACCASE-14"/>
    <property type="match status" value="1"/>
</dbReference>
<dbReference type="PANTHER" id="PTHR11709">
    <property type="entry name" value="MULTI-COPPER OXIDASE"/>
    <property type="match status" value="1"/>
</dbReference>
<dbReference type="Pfam" id="PF00394">
    <property type="entry name" value="Cu-oxidase"/>
    <property type="match status" value="1"/>
</dbReference>
<dbReference type="Pfam" id="PF07731">
    <property type="entry name" value="Cu-oxidase_2"/>
    <property type="match status" value="1"/>
</dbReference>
<dbReference type="Pfam" id="PF07732">
    <property type="entry name" value="Cu-oxidase_3"/>
    <property type="match status" value="1"/>
</dbReference>
<dbReference type="SUPFAM" id="SSF49503">
    <property type="entry name" value="Cupredoxins"/>
    <property type="match status" value="3"/>
</dbReference>
<dbReference type="PROSITE" id="PS00079">
    <property type="entry name" value="MULTICOPPER_OXIDASE1"/>
    <property type="match status" value="1"/>
</dbReference>
<dbReference type="PROSITE" id="PS00080">
    <property type="entry name" value="MULTICOPPER_OXIDASE2"/>
    <property type="match status" value="1"/>
</dbReference>
<feature type="signal peptide" evidence="2">
    <location>
        <begin position="1"/>
        <end position="28"/>
    </location>
</feature>
<feature type="chain" id="PRO_0000291886" description="Putative laccase-1">
    <location>
        <begin position="29"/>
        <end position="577"/>
    </location>
</feature>
<feature type="domain" description="Plastocyanin-like 1">
    <location>
        <begin position="37"/>
        <end position="153"/>
    </location>
</feature>
<feature type="domain" description="Plastocyanin-like 2">
    <location>
        <begin position="163"/>
        <end position="316"/>
    </location>
</feature>
<feature type="domain" description="Plastocyanin-like 3">
    <location>
        <begin position="442"/>
        <end position="561"/>
    </location>
</feature>
<feature type="binding site" evidence="1">
    <location>
        <position position="87"/>
    </location>
    <ligand>
        <name>Cu cation</name>
        <dbReference type="ChEBI" id="CHEBI:23378"/>
        <label>1</label>
    </ligand>
</feature>
<feature type="binding site" evidence="1">
    <location>
        <position position="89"/>
    </location>
    <ligand>
        <name>Cu cation</name>
        <dbReference type="ChEBI" id="CHEBI:23378"/>
        <label>2</label>
    </ligand>
</feature>
<feature type="binding site" evidence="1">
    <location>
        <position position="132"/>
    </location>
    <ligand>
        <name>Cu cation</name>
        <dbReference type="ChEBI" id="CHEBI:23378"/>
        <label>2</label>
    </ligand>
</feature>
<feature type="binding site" evidence="1">
    <location>
        <position position="134"/>
    </location>
    <ligand>
        <name>Cu cation</name>
        <dbReference type="ChEBI" id="CHEBI:23378"/>
        <label>3</label>
    </ligand>
</feature>
<feature type="binding site" evidence="1">
    <location>
        <position position="478"/>
    </location>
    <ligand>
        <name>Cu cation</name>
        <dbReference type="ChEBI" id="CHEBI:23378"/>
        <label>4</label>
    </ligand>
</feature>
<feature type="binding site" evidence="1">
    <location>
        <position position="481"/>
    </location>
    <ligand>
        <name>Cu cation</name>
        <dbReference type="ChEBI" id="CHEBI:23378"/>
        <label>1</label>
    </ligand>
</feature>
<feature type="binding site" evidence="1">
    <location>
        <position position="483"/>
    </location>
    <ligand>
        <name>Cu cation</name>
        <dbReference type="ChEBI" id="CHEBI:23378"/>
        <label>3</label>
    </ligand>
</feature>
<feature type="binding site" evidence="1">
    <location>
        <position position="540"/>
    </location>
    <ligand>
        <name>Cu cation</name>
        <dbReference type="ChEBI" id="CHEBI:23378"/>
        <label>3</label>
    </ligand>
</feature>
<feature type="binding site" evidence="1">
    <location>
        <position position="541"/>
    </location>
    <ligand>
        <name>Cu cation</name>
        <dbReference type="ChEBI" id="CHEBI:23378"/>
        <label>4</label>
    </ligand>
</feature>
<feature type="binding site" evidence="1">
    <location>
        <position position="542"/>
    </location>
    <ligand>
        <name>Cu cation</name>
        <dbReference type="ChEBI" id="CHEBI:23378"/>
        <label>2</label>
    </ligand>
</feature>
<feature type="binding site" evidence="1">
    <location>
        <position position="546"/>
    </location>
    <ligand>
        <name>Cu cation</name>
        <dbReference type="ChEBI" id="CHEBI:23378"/>
        <label>4</label>
    </ligand>
</feature>
<feature type="binding site" evidence="1">
    <location>
        <position position="551"/>
    </location>
    <ligand>
        <name>Cu cation</name>
        <dbReference type="ChEBI" id="CHEBI:23378"/>
        <label>4</label>
    </ligand>
</feature>
<feature type="glycosylation site" description="N-linked (GlcNAc...) asparagine" evidence="2">
    <location>
        <position position="42"/>
    </location>
</feature>
<feature type="glycosylation site" description="N-linked (GlcNAc...) asparagine" evidence="2">
    <location>
        <position position="83"/>
    </location>
</feature>
<feature type="glycosylation site" description="N-linked (GlcNAc...) asparagine" evidence="2">
    <location>
        <position position="115"/>
    </location>
</feature>
<feature type="glycosylation site" description="N-linked (GlcNAc...) asparagine" evidence="2">
    <location>
        <position position="276"/>
    </location>
</feature>
<feature type="glycosylation site" description="N-linked (GlcNAc...) asparagine" evidence="2">
    <location>
        <position position="304"/>
    </location>
</feature>
<feature type="glycosylation site" description="N-linked (GlcNAc...) asparagine" evidence="2">
    <location>
        <position position="382"/>
    </location>
</feature>
<feature type="glycosylation site" description="N-linked (GlcNAc...) asparagine" evidence="2">
    <location>
        <position position="402"/>
    </location>
</feature>
<sequence length="577" mass="64530">MGTAKIPALLWFLLAGLVLALAVNPAHGAKTRHYDFFITETNYTRLCHEKSILTVNGQFPGPTIYARKGDFIIVNVHNNGNKNITIHWHGVDQPRNPWSDGPEFITQCPIRPGGNFTYQVILFEEEGTLWWHAHSDFDRATVHGAIVIHPKRGTTFLFRKLDKEIPWWNDDVEHVLDKAKRIGGDVEPSDTNTINGQPGDMFPLCSRDDTFKVAVQQGNTYLLRVINAGLTNDMFFAIAGHRLTVVGIDARYTKPITVDYIMIAPGQTMDVLLKANRTLGSNSRYYMAARTFITLPVDTIRFNNSTATAIVEYTDSAVARPVGPPEFPVLLPAIKDEDAAMAFVKQLRSLGNQDHPVHVPKQVDEHMLIDIDINFLPCDANNATNKLCEGPQGNRFAASLNNVSFQNPAIDVLDAYYYGSGRGVYEENFPNKLTVIVNPTGDINGGGPLLTKRGTKVKVLEYGTVVEVVFQDLSIENHPMHLHGFTFYVVGRGSGTFDERRDPATYNLIDPPFQNTVSVPKSSWAAIRFRADNPGVWFMHCHFDRHVVWGMDTMFIVKDGKTPQAQMLPRPPNMPEC</sequence>
<gene>
    <name type="primary">LAC1</name>
    <name type="ordered locus">Os01g0374600</name>
    <name type="ordered locus">LOC_Os01g27700</name>
    <name type="ORF">B1045D11.30</name>
    <name type="ORF">OsJ_001779</name>
</gene>
<protein>
    <recommendedName>
        <fullName>Putative laccase-1</fullName>
        <ecNumber>1.10.3.2</ecNumber>
    </recommendedName>
    <alternativeName>
        <fullName>Benzenediol:oxygen oxidoreductase 1</fullName>
    </alternativeName>
    <alternativeName>
        <fullName>Diphenol oxidase 1</fullName>
    </alternativeName>
    <alternativeName>
        <fullName>Urishiol oxidase 1</fullName>
    </alternativeName>
</protein>
<comment type="function">
    <text evidence="1">Lignin degradation and detoxification of lignin-derived products.</text>
</comment>
<comment type="catalytic activity">
    <reaction>
        <text>4 hydroquinone + O2 = 4 benzosemiquinone + 2 H2O</text>
        <dbReference type="Rhea" id="RHEA:11276"/>
        <dbReference type="ChEBI" id="CHEBI:15377"/>
        <dbReference type="ChEBI" id="CHEBI:15379"/>
        <dbReference type="ChEBI" id="CHEBI:17594"/>
        <dbReference type="ChEBI" id="CHEBI:17977"/>
        <dbReference type="EC" id="1.10.3.2"/>
    </reaction>
</comment>
<comment type="cofactor">
    <cofactor evidence="1">
        <name>Cu cation</name>
        <dbReference type="ChEBI" id="CHEBI:23378"/>
    </cofactor>
    <text evidence="1">Binds 4 Cu cations per monomer.</text>
</comment>
<comment type="subcellular location">
    <subcellularLocation>
        <location evidence="3">Secreted</location>
        <location evidence="3">Extracellular space</location>
        <location evidence="3">Apoplast</location>
    </subcellularLocation>
</comment>
<comment type="similarity">
    <text evidence="3">Belongs to the multicopper oxidase family.</text>
</comment>
<comment type="sequence caution" evidence="3">
    <conflict type="erroneous gene model prediction">
        <sequence resource="EMBL-CDS" id="BAF04988"/>
    </conflict>
</comment>
<evidence type="ECO:0000250" key="1"/>
<evidence type="ECO:0000255" key="2"/>
<evidence type="ECO:0000305" key="3"/>